<keyword id="KW-0002">3D-structure</keyword>
<keyword id="KW-0121">Carboxypeptidase</keyword>
<keyword id="KW-0961">Cell wall biogenesis/degradation</keyword>
<keyword id="KW-0963">Cytoplasm</keyword>
<keyword id="KW-0378">Hydrolase</keyword>
<keyword id="KW-0479">Metal-binding</keyword>
<keyword id="KW-0482">Metalloprotease</keyword>
<keyword id="KW-0645">Protease</keyword>
<keyword id="KW-0862">Zinc</keyword>
<organism>
    <name type="scientific">Vibrio campbellii (strain ATCC BAA-1116)</name>
    <dbReference type="NCBI Taxonomy" id="2902295"/>
    <lineage>
        <taxon>Bacteria</taxon>
        <taxon>Pseudomonadati</taxon>
        <taxon>Pseudomonadota</taxon>
        <taxon>Gammaproteobacteria</taxon>
        <taxon>Vibrionales</taxon>
        <taxon>Vibrionaceae</taxon>
        <taxon>Vibrio</taxon>
    </lineage>
</organism>
<protein>
    <recommendedName>
        <fullName evidence="1 4">Murein peptide amidase A</fullName>
        <ecNumber evidence="1 3">3.4.17.-</ecNumber>
    </recommendedName>
    <alternativeName>
        <fullName evidence="1 5">Gamma-D-Glu-Dap amidase</fullName>
    </alternativeName>
    <alternativeName>
        <fullName evidence="1 4">Zinc metallocarboxypeptidase MpaA</fullName>
    </alternativeName>
</protein>
<proteinExistence type="evidence at protein level"/>
<name>MPAA_VIBC1</name>
<dbReference type="EC" id="3.4.17.-" evidence="1 3"/>
<dbReference type="EMBL" id="CP000790">
    <property type="protein sequence ID" value="ABU74930.1"/>
    <property type="molecule type" value="Genomic_DNA"/>
</dbReference>
<dbReference type="PDB" id="4AXV">
    <property type="method" value="X-ray"/>
    <property type="resolution" value="2.17 A"/>
    <property type="chains" value="A=14-248"/>
</dbReference>
<dbReference type="PDBsum" id="4AXV"/>
<dbReference type="SMR" id="A7N805"/>
<dbReference type="KEGG" id="vha:VIBHAR_07057"/>
<dbReference type="PATRIC" id="fig|338187.36.peg.5881"/>
<dbReference type="UniPathway" id="UPA00549"/>
<dbReference type="EvolutionaryTrace" id="A7N805"/>
<dbReference type="Proteomes" id="UP000008152">
    <property type="component" value="Chromosome II"/>
</dbReference>
<dbReference type="GO" id="GO:0005737">
    <property type="term" value="C:cytoplasm"/>
    <property type="evidence" value="ECO:0007669"/>
    <property type="project" value="UniProtKB-SubCell"/>
</dbReference>
<dbReference type="GO" id="GO:0004040">
    <property type="term" value="F:amidase activity"/>
    <property type="evidence" value="ECO:0007669"/>
    <property type="project" value="InterPro"/>
</dbReference>
<dbReference type="GO" id="GO:0016788">
    <property type="term" value="F:hydrolase activity, acting on ester bonds"/>
    <property type="evidence" value="ECO:0007669"/>
    <property type="project" value="InterPro"/>
</dbReference>
<dbReference type="GO" id="GO:0061473">
    <property type="term" value="F:murein tripeptide carboxypeptidase activity"/>
    <property type="evidence" value="ECO:0000314"/>
    <property type="project" value="UniProtKB"/>
</dbReference>
<dbReference type="GO" id="GO:0008270">
    <property type="term" value="F:zinc ion binding"/>
    <property type="evidence" value="ECO:0000314"/>
    <property type="project" value="UniProtKB"/>
</dbReference>
<dbReference type="GO" id="GO:0016998">
    <property type="term" value="P:cell wall macromolecule catabolic process"/>
    <property type="evidence" value="ECO:0007669"/>
    <property type="project" value="UniProtKB-UniPathway"/>
</dbReference>
<dbReference type="GO" id="GO:0071555">
    <property type="term" value="P:cell wall organization"/>
    <property type="evidence" value="ECO:0007669"/>
    <property type="project" value="UniProtKB-KW"/>
</dbReference>
<dbReference type="GO" id="GO:0009253">
    <property type="term" value="P:peptidoglycan catabolic process"/>
    <property type="evidence" value="ECO:0000314"/>
    <property type="project" value="UniProtKB"/>
</dbReference>
<dbReference type="GO" id="GO:0006508">
    <property type="term" value="P:proteolysis"/>
    <property type="evidence" value="ECO:0007669"/>
    <property type="project" value="UniProtKB-KW"/>
</dbReference>
<dbReference type="CDD" id="cd06904">
    <property type="entry name" value="M14_MpaA-like"/>
    <property type="match status" value="1"/>
</dbReference>
<dbReference type="Gene3D" id="3.40.630.10">
    <property type="entry name" value="Zn peptidases"/>
    <property type="match status" value="1"/>
</dbReference>
<dbReference type="HAMAP" id="MF_02211">
    <property type="entry name" value="MpaA_carboxypeptidase"/>
    <property type="match status" value="1"/>
</dbReference>
<dbReference type="InterPro" id="IPR055438">
    <property type="entry name" value="AstE_AspA_cat"/>
</dbReference>
<dbReference type="InterPro" id="IPR043691">
    <property type="entry name" value="MpaA"/>
</dbReference>
<dbReference type="InterPro" id="IPR000834">
    <property type="entry name" value="Peptidase_M14"/>
</dbReference>
<dbReference type="NCBIfam" id="NF007897">
    <property type="entry name" value="PRK10602.1"/>
    <property type="match status" value="1"/>
</dbReference>
<dbReference type="Pfam" id="PF24827">
    <property type="entry name" value="AstE_AspA_cat"/>
    <property type="match status" value="1"/>
</dbReference>
<dbReference type="SUPFAM" id="SSF53187">
    <property type="entry name" value="Zn-dependent exopeptidases"/>
    <property type="match status" value="1"/>
</dbReference>
<dbReference type="PROSITE" id="PS52035">
    <property type="entry name" value="PEPTIDASE_M14"/>
    <property type="match status" value="1"/>
</dbReference>
<gene>
    <name evidence="1 4" type="primary">mpaA</name>
    <name evidence="7" type="ordered locus">VIBHAR_07057</name>
</gene>
<feature type="chain" id="PRO_0000446867" description="Murein peptide amidase A">
    <location>
        <begin position="1"/>
        <end position="248"/>
    </location>
</feature>
<feature type="domain" description="Peptidase M14" evidence="2">
    <location>
        <begin position="3"/>
        <end position="245"/>
    </location>
</feature>
<feature type="active site" description="Proton donor/acceptor" evidence="2">
    <location>
        <position position="221"/>
    </location>
</feature>
<feature type="binding site" evidence="2 3 8">
    <location>
        <position position="60"/>
    </location>
    <ligand>
        <name>Zn(2+)</name>
        <dbReference type="ChEBI" id="CHEBI:29105"/>
        <note>catalytic</note>
    </ligand>
</feature>
<feature type="binding site" evidence="2 3 8">
    <location>
        <position position="63"/>
    </location>
    <ligand>
        <name>Zn(2+)</name>
        <dbReference type="ChEBI" id="CHEBI:29105"/>
        <note>catalytic</note>
    </ligand>
</feature>
<feature type="binding site" evidence="2 3 8">
    <location>
        <position position="168"/>
    </location>
    <ligand>
        <name>Zn(2+)</name>
        <dbReference type="ChEBI" id="CHEBI:29105"/>
        <note>catalytic</note>
    </ligand>
</feature>
<feature type="helix" evidence="9">
    <location>
        <begin position="18"/>
        <end position="20"/>
    </location>
</feature>
<feature type="strand" evidence="9">
    <location>
        <begin position="29"/>
        <end position="33"/>
    </location>
</feature>
<feature type="strand" evidence="9">
    <location>
        <begin position="39"/>
        <end position="43"/>
    </location>
</feature>
<feature type="strand" evidence="9">
    <location>
        <begin position="54"/>
        <end position="57"/>
    </location>
</feature>
<feature type="helix" evidence="9">
    <location>
        <begin position="65"/>
        <end position="76"/>
    </location>
</feature>
<feature type="helix" evidence="9">
    <location>
        <begin position="79"/>
        <end position="81"/>
    </location>
</feature>
<feature type="strand" evidence="9">
    <location>
        <begin position="84"/>
        <end position="88"/>
    </location>
</feature>
<feature type="helix" evidence="9">
    <location>
        <begin position="92"/>
        <end position="96"/>
    </location>
</feature>
<feature type="helix" evidence="9">
    <location>
        <begin position="108"/>
        <end position="110"/>
    </location>
</feature>
<feature type="strand" evidence="9">
    <location>
        <begin position="122"/>
        <end position="124"/>
    </location>
</feature>
<feature type="strand" evidence="9">
    <location>
        <begin position="135"/>
        <end position="138"/>
    </location>
</feature>
<feature type="helix" evidence="9">
    <location>
        <begin position="147"/>
        <end position="159"/>
    </location>
</feature>
<feature type="strand" evidence="9">
    <location>
        <begin position="164"/>
        <end position="168"/>
    </location>
</feature>
<feature type="strand" evidence="9">
    <location>
        <begin position="173"/>
        <end position="175"/>
    </location>
</feature>
<feature type="strand" evidence="9">
    <location>
        <begin position="177"/>
        <end position="179"/>
    </location>
</feature>
<feature type="helix" evidence="9">
    <location>
        <begin position="181"/>
        <end position="190"/>
    </location>
</feature>
<feature type="strand" evidence="9">
    <location>
        <begin position="198"/>
        <end position="202"/>
    </location>
</feature>
<feature type="helix" evidence="9">
    <location>
        <begin position="206"/>
        <end position="212"/>
    </location>
</feature>
<feature type="strand" evidence="9">
    <location>
        <begin position="217"/>
        <end position="221"/>
    </location>
</feature>
<feature type="helix" evidence="9">
    <location>
        <begin position="227"/>
        <end position="242"/>
    </location>
</feature>
<comment type="function">
    <text evidence="3">Involved in muropeptide degradation. Catalyzes the hydrolysis of the gamma-D-glutamyl-diaminopimelic acid (gamma-D-Glu-Dap) amide bond in the murein tripeptide L-alanyl-gamma-D-glutamyl-meso-diaminopimelic acid, leading to the formation of L-Ala-gamma-D-Glu and Dap. Has weak activity with L-Ala-gamma-D-Glu-L-Lys, MurNAc-tripeptide and gamma-D-Glu-meso-Dap. Cannot hydrolyze murein tetrapeptide.</text>
</comment>
<comment type="catalytic activity">
    <reaction evidence="1 3">
        <text>L-alanyl-gamma-D-glutamyl-meso-2,6-diaminopimelate + H2O = L-alanyl-D-glutamate + meso-2,6-diaminopimelate</text>
        <dbReference type="Rhea" id="RHEA:28398"/>
        <dbReference type="ChEBI" id="CHEBI:15377"/>
        <dbReference type="ChEBI" id="CHEBI:57791"/>
        <dbReference type="ChEBI" id="CHEBI:61395"/>
        <dbReference type="ChEBI" id="CHEBI:61401"/>
    </reaction>
</comment>
<comment type="cofactor">
    <cofactor evidence="1 3">
        <name>Zn(2+)</name>
        <dbReference type="ChEBI" id="CHEBI:29105"/>
    </cofactor>
    <text evidence="1 3">Binds 1 zinc ion per subunit.</text>
</comment>
<comment type="pathway">
    <text evidence="1 6">Cell wall degradation; peptidoglycan degradation.</text>
</comment>
<comment type="subunit">
    <text evidence="1 3">Homodimer.</text>
</comment>
<comment type="subcellular location">
    <subcellularLocation>
        <location evidence="1">Cytoplasm</location>
    </subcellularLocation>
</comment>
<comment type="similarity">
    <text evidence="1 5">Belongs to the peptidase M14 family.</text>
</comment>
<accession>A7N805</accession>
<evidence type="ECO:0000255" key="1">
    <source>
        <dbReference type="HAMAP-Rule" id="MF_02211"/>
    </source>
</evidence>
<evidence type="ECO:0000255" key="2">
    <source>
        <dbReference type="PROSITE-ProRule" id="PRU01379"/>
    </source>
</evidence>
<evidence type="ECO:0000269" key="3">
    <source>
    </source>
</evidence>
<evidence type="ECO:0000303" key="4">
    <source>
    </source>
</evidence>
<evidence type="ECO:0000305" key="5"/>
<evidence type="ECO:0000305" key="6">
    <source>
    </source>
</evidence>
<evidence type="ECO:0000312" key="7">
    <source>
        <dbReference type="EMBL" id="ABU74930.1"/>
    </source>
</evidence>
<evidence type="ECO:0007744" key="8">
    <source>
        <dbReference type="PDB" id="4AXV"/>
    </source>
</evidence>
<evidence type="ECO:0007829" key="9">
    <source>
        <dbReference type="PDB" id="4AXV"/>
    </source>
</evidence>
<reference key="1">
    <citation type="submission" date="2007-08" db="EMBL/GenBank/DDBJ databases">
        <authorList>
            <consortium name="The Vibrio harveyi Genome Sequencing Project"/>
            <person name="Bassler B."/>
            <person name="Clifton S.W."/>
            <person name="Fulton L."/>
            <person name="Delehaunty K."/>
            <person name="Fronick C."/>
            <person name="Harrison M."/>
            <person name="Markivic C."/>
            <person name="Fulton R."/>
            <person name="Tin-Wollam A.-M."/>
            <person name="Shah N."/>
            <person name="Pepin K."/>
            <person name="Nash W."/>
            <person name="Thiruvilangam P."/>
            <person name="Bhonagiri V."/>
            <person name="Waters C."/>
            <person name="Tu K.C."/>
            <person name="Irgon J."/>
            <person name="Wilson R.K."/>
        </authorList>
    </citation>
    <scope>NUCLEOTIDE SEQUENCE [LARGE SCALE GENOMIC DNA]</scope>
    <source>
        <strain>ATCC BAA-1116 / BB120</strain>
    </source>
</reference>
<reference evidence="8" key="2">
    <citation type="journal article" date="2012" name="Biochem. J.">
        <title>MpaA is a murein-tripeptide-specific zinc carboxypeptidase that functions as part of a catabolic pathway for peptidoglycan-derived peptides in gamma-proteobacteria.</title>
        <authorList>
            <person name="Maqbool A."/>
            <person name="Herve M."/>
            <person name="Mengin-Lecreulx D."/>
            <person name="Wilkinson A.J."/>
            <person name="Thomas G.H."/>
        </authorList>
    </citation>
    <scope>X-RAY CRYSTALLOGRAPHY (2.17 ANGSTROMS) OF 14-248 IN COMPLEX WITH ZINC</scope>
    <scope>FUNCTION</scope>
    <scope>CATALYTIC ACTIVITY</scope>
    <scope>COFACTOR</scope>
    <scope>PATHWAY</scope>
    <scope>SUBUNIT</scope>
    <source>
        <strain>ATCC BAA-1116 / BB120</strain>
    </source>
</reference>
<sequence length="248" mass="27573">MNRYYSNNQEITVSLIPRTERAAFLITPTSYGKSVLGAPLLYFPAQVESNSRGLILAGTHGDETASIAGLSCALRSLPAECLKHDVILSMNPDANQLGTRANANQVDLNRAFPTQNWTEHGTVYRWSSHTPVRDVKVKTGDKEQLEPEVDALISLIELRRPKFVVSFHEPLAFVDDPAHSDLAKWLGKQFNLPIVDDVDYETPGSFGTWCNERQLPCITVELPPISADLTIEKHLDAFIALLQHDPDL</sequence>